<sequence>MSTMIDIRRLQTVNELAREGASTVAENMSQLTGVETQMQITKINVIDVEDLGAHLGAAKQVGVSVPLKEQPYGSVLVLFDDESARRVAGTMMGGIESEGGGYSDMERSAIREVGNIMTSGFIDGWANVLGRTIDISTPQLIRASGEDIASHCVDPGEHEIAMVFDAELHAPDANVEAKIYSFPDIEAFVSMINSI</sequence>
<keyword id="KW-0145">Chemotaxis</keyword>
<keyword id="KW-0378">Hydrolase</keyword>
<organism>
    <name type="scientific">Halobacterium salinarum (strain ATCC 29341 / DSM 671 / R1)</name>
    <dbReference type="NCBI Taxonomy" id="478009"/>
    <lineage>
        <taxon>Archaea</taxon>
        <taxon>Methanobacteriati</taxon>
        <taxon>Methanobacteriota</taxon>
        <taxon>Stenosarchaea group</taxon>
        <taxon>Halobacteria</taxon>
        <taxon>Halobacteriales</taxon>
        <taxon>Halobacteriaceae</taxon>
        <taxon>Halobacterium</taxon>
        <taxon>Halobacterium salinarum NRC-34001</taxon>
    </lineage>
</organism>
<protein>
    <recommendedName>
        <fullName>Putative CheY-P phosphatase CheC1</fullName>
    </recommendedName>
</protein>
<evidence type="ECO:0000250" key="1"/>
<evidence type="ECO:0000269" key="2">
    <source>
    </source>
</evidence>
<evidence type="ECO:0000305" key="3"/>
<feature type="chain" id="PRO_0000429070" description="Putative CheY-P phosphatase CheC1">
    <location>
        <begin position="1"/>
        <end position="195"/>
    </location>
</feature>
<comment type="function">
    <text evidence="1">Catalyzes the dephosphorylation of CheY-P.</text>
</comment>
<comment type="disruption phenotype">
    <text evidence="2">Deletion causes a reduction in chemo- and phototactic ability. Mutant has a 88:12 distribution of forward and reverse swimming (distribution is 50:50 for the wild-type).</text>
</comment>
<comment type="similarity">
    <text evidence="3">Belongs to the CheC family.</text>
</comment>
<accession>B0R4J8</accession>
<accession>Q48298</accession>
<accession>Q7LY98</accession>
<gene>
    <name type="primary">cheC1</name>
    <name type="synonym">cheJ</name>
    <name type="ordered locus">OE_2414R</name>
</gene>
<reference key="1">
    <citation type="journal article" date="1995" name="EMBO J.">
        <title>Chemotaxis and phototaxis require a CheA histidine kinase in the archaeon Halobacterium salinarium.</title>
        <authorList>
            <person name="Rudolph J."/>
            <person name="Oesterhelt D."/>
        </authorList>
    </citation>
    <scope>NUCLEOTIDE SEQUENCE [GENOMIC DNA]</scope>
    <source>
        <strain>R1 / S9</strain>
    </source>
</reference>
<reference key="2">
    <citation type="journal article" date="2008" name="Genomics">
        <title>Evolution in the laboratory: the genome of Halobacterium salinarum strain R1 compared to that of strain NRC-1.</title>
        <authorList>
            <person name="Pfeiffer F."/>
            <person name="Schuster S.C."/>
            <person name="Broicher A."/>
            <person name="Falb M."/>
            <person name="Palm P."/>
            <person name="Rodewald K."/>
            <person name="Ruepp A."/>
            <person name="Soppa J."/>
            <person name="Tittor J."/>
            <person name="Oesterhelt D."/>
        </authorList>
    </citation>
    <scope>NUCLEOTIDE SEQUENCE [LARGE SCALE GENOMIC DNA]</scope>
    <source>
        <strain>ATCC 29341 / DSM 671 / R1</strain>
    </source>
</reference>
<reference key="3">
    <citation type="journal article" date="1996" name="J. Mol. Biol.">
        <title>Deletion analysis of the che operon in the archaeon Halobacterium salinarium.</title>
        <authorList>
            <person name="Rudolph J."/>
            <person name="Oesterhelt D."/>
        </authorList>
    </citation>
    <scope>DISRUPTION PHENOTYPE</scope>
</reference>
<dbReference type="EMBL" id="X82645">
    <property type="protein sequence ID" value="CAA57971.1"/>
    <property type="molecule type" value="Genomic_DNA"/>
</dbReference>
<dbReference type="EMBL" id="AM774415">
    <property type="protein sequence ID" value="CAP13663.1"/>
    <property type="molecule type" value="Genomic_DNA"/>
</dbReference>
<dbReference type="PIR" id="D84253">
    <property type="entry name" value="D84253"/>
</dbReference>
<dbReference type="PIR" id="S54305">
    <property type="entry name" value="S54305"/>
</dbReference>
<dbReference type="RefSeq" id="WP_010902689.1">
    <property type="nucleotide sequence ID" value="NC_010364.1"/>
</dbReference>
<dbReference type="SMR" id="B0R4J8"/>
<dbReference type="EnsemblBacteria" id="CAP13663">
    <property type="protein sequence ID" value="CAP13663"/>
    <property type="gene ID" value="OE_2414R"/>
</dbReference>
<dbReference type="KEGG" id="hsl:OE_2414R"/>
<dbReference type="HOGENOM" id="CLU_087860_3_1_2"/>
<dbReference type="PhylomeDB" id="B0R4J8"/>
<dbReference type="Proteomes" id="UP000001321">
    <property type="component" value="Chromosome"/>
</dbReference>
<dbReference type="GO" id="GO:0016787">
    <property type="term" value="F:hydrolase activity"/>
    <property type="evidence" value="ECO:0007669"/>
    <property type="project" value="UniProtKB-KW"/>
</dbReference>
<dbReference type="GO" id="GO:0006935">
    <property type="term" value="P:chemotaxis"/>
    <property type="evidence" value="ECO:0007669"/>
    <property type="project" value="UniProtKB-KW"/>
</dbReference>
<dbReference type="CDD" id="cd17911">
    <property type="entry name" value="CheC_ClassIII"/>
    <property type="match status" value="1"/>
</dbReference>
<dbReference type="Gene3D" id="3.40.1550.10">
    <property type="entry name" value="CheC-like"/>
    <property type="match status" value="1"/>
</dbReference>
<dbReference type="InterPro" id="IPR007597">
    <property type="entry name" value="CheC"/>
</dbReference>
<dbReference type="InterPro" id="IPR028976">
    <property type="entry name" value="CheC-like_sf"/>
</dbReference>
<dbReference type="InterPro" id="IPR050992">
    <property type="entry name" value="CheZ_family_phosphatases"/>
</dbReference>
<dbReference type="PANTHER" id="PTHR43693">
    <property type="entry name" value="PROTEIN PHOSPHATASE CHEZ"/>
    <property type="match status" value="1"/>
</dbReference>
<dbReference type="PANTHER" id="PTHR43693:SF1">
    <property type="entry name" value="PROTEIN PHOSPHATASE CHEZ"/>
    <property type="match status" value="1"/>
</dbReference>
<dbReference type="Pfam" id="PF04509">
    <property type="entry name" value="CheC"/>
    <property type="match status" value="1"/>
</dbReference>
<dbReference type="SUPFAM" id="SSF103039">
    <property type="entry name" value="CheC-like"/>
    <property type="match status" value="1"/>
</dbReference>
<name>CHEC1_HALS3</name>
<proteinExistence type="inferred from homology"/>